<sequence length="346" mass="37961">MQPIRYRTDLTPYNTFGLRAQARAFIALEHADELRDIVRLLEFDRDTVLWLGGGSNILLMQDYAGLVVHMENKGIREIARSDGMVLIEAQAGEIWHDFVLHTVALGLSGLENLSLIPGTVGASPVQNIGAYGVEAKDVIHSVRCFDLDTETFVELANADCRFAYRESLFKQEGKGRYVIVSVVFALKTHFVPTLGYGDLAAAVAELSAGRVPTAKDVSDAVCAIRNSKLPNPNVLGNVGSFFKNPVVSAEKAATLLQRHPDMPRYPQPDGSVKLAAGWLIDQCRLKGFQIGGAAVHDRQALVLVNKNNASANDVRQLAQHIKFTVFARFQVELHAEPNWLPASFSL</sequence>
<name>MURB_NEIMB</name>
<evidence type="ECO:0000255" key="1">
    <source>
        <dbReference type="HAMAP-Rule" id="MF_00037"/>
    </source>
</evidence>
<organism>
    <name type="scientific">Neisseria meningitidis serogroup B (strain ATCC BAA-335 / MC58)</name>
    <dbReference type="NCBI Taxonomy" id="122586"/>
    <lineage>
        <taxon>Bacteria</taxon>
        <taxon>Pseudomonadati</taxon>
        <taxon>Pseudomonadota</taxon>
        <taxon>Betaproteobacteria</taxon>
        <taxon>Neisseriales</taxon>
        <taxon>Neisseriaceae</taxon>
        <taxon>Neisseria</taxon>
    </lineage>
</organism>
<keyword id="KW-0131">Cell cycle</keyword>
<keyword id="KW-0132">Cell division</keyword>
<keyword id="KW-0133">Cell shape</keyword>
<keyword id="KW-0961">Cell wall biogenesis/degradation</keyword>
<keyword id="KW-0963">Cytoplasm</keyword>
<keyword id="KW-0274">FAD</keyword>
<keyword id="KW-0285">Flavoprotein</keyword>
<keyword id="KW-0521">NADP</keyword>
<keyword id="KW-0560">Oxidoreductase</keyword>
<keyword id="KW-0573">Peptidoglycan synthesis</keyword>
<keyword id="KW-1185">Reference proteome</keyword>
<gene>
    <name evidence="1" type="primary">murB</name>
    <name type="ordered locus">NMB0811</name>
</gene>
<proteinExistence type="inferred from homology"/>
<reference key="1">
    <citation type="journal article" date="2000" name="Science">
        <title>Complete genome sequence of Neisseria meningitidis serogroup B strain MC58.</title>
        <authorList>
            <person name="Tettelin H."/>
            <person name="Saunders N.J."/>
            <person name="Heidelberg J.F."/>
            <person name="Jeffries A.C."/>
            <person name="Nelson K.E."/>
            <person name="Eisen J.A."/>
            <person name="Ketchum K.A."/>
            <person name="Hood D.W."/>
            <person name="Peden J.F."/>
            <person name="Dodson R.J."/>
            <person name="Nelson W.C."/>
            <person name="Gwinn M.L."/>
            <person name="DeBoy R.T."/>
            <person name="Peterson J.D."/>
            <person name="Hickey E.K."/>
            <person name="Haft D.H."/>
            <person name="Salzberg S.L."/>
            <person name="White O."/>
            <person name="Fleischmann R.D."/>
            <person name="Dougherty B.A."/>
            <person name="Mason T.M."/>
            <person name="Ciecko A."/>
            <person name="Parksey D.S."/>
            <person name="Blair E."/>
            <person name="Cittone H."/>
            <person name="Clark E.B."/>
            <person name="Cotton M.D."/>
            <person name="Utterback T.R."/>
            <person name="Khouri H.M."/>
            <person name="Qin H."/>
            <person name="Vamathevan J.J."/>
            <person name="Gill J."/>
            <person name="Scarlato V."/>
            <person name="Masignani V."/>
            <person name="Pizza M."/>
            <person name="Grandi G."/>
            <person name="Sun L."/>
            <person name="Smith H.O."/>
            <person name="Fraser C.M."/>
            <person name="Moxon E.R."/>
            <person name="Rappuoli R."/>
            <person name="Venter J.C."/>
        </authorList>
    </citation>
    <scope>NUCLEOTIDE SEQUENCE [LARGE SCALE GENOMIC DNA]</scope>
    <source>
        <strain>ATCC BAA-335 / MC58</strain>
    </source>
</reference>
<accession>Q9K016</accession>
<comment type="function">
    <text evidence="1">Cell wall formation.</text>
</comment>
<comment type="catalytic activity">
    <reaction evidence="1">
        <text>UDP-N-acetyl-alpha-D-muramate + NADP(+) = UDP-N-acetyl-3-O-(1-carboxyvinyl)-alpha-D-glucosamine + NADPH + H(+)</text>
        <dbReference type="Rhea" id="RHEA:12248"/>
        <dbReference type="ChEBI" id="CHEBI:15378"/>
        <dbReference type="ChEBI" id="CHEBI:57783"/>
        <dbReference type="ChEBI" id="CHEBI:58349"/>
        <dbReference type="ChEBI" id="CHEBI:68483"/>
        <dbReference type="ChEBI" id="CHEBI:70757"/>
        <dbReference type="EC" id="1.3.1.98"/>
    </reaction>
</comment>
<comment type="cofactor">
    <cofactor evidence="1">
        <name>FAD</name>
        <dbReference type="ChEBI" id="CHEBI:57692"/>
    </cofactor>
</comment>
<comment type="pathway">
    <text evidence="1">Cell wall biogenesis; peptidoglycan biosynthesis.</text>
</comment>
<comment type="subcellular location">
    <subcellularLocation>
        <location evidence="1">Cytoplasm</location>
    </subcellularLocation>
</comment>
<comment type="similarity">
    <text evidence="1">Belongs to the MurB family.</text>
</comment>
<dbReference type="EC" id="1.3.1.98" evidence="1"/>
<dbReference type="EMBL" id="AE002098">
    <property type="protein sequence ID" value="AAF41224.1"/>
    <property type="molecule type" value="Genomic_DNA"/>
</dbReference>
<dbReference type="PIR" id="B81156">
    <property type="entry name" value="B81156"/>
</dbReference>
<dbReference type="RefSeq" id="NP_273853.1">
    <property type="nucleotide sequence ID" value="NC_003112.2"/>
</dbReference>
<dbReference type="RefSeq" id="WP_002225411.1">
    <property type="nucleotide sequence ID" value="NC_003112.2"/>
</dbReference>
<dbReference type="SMR" id="Q9K016"/>
<dbReference type="FunCoup" id="Q9K016">
    <property type="interactions" value="446"/>
</dbReference>
<dbReference type="STRING" id="122586.NMB0811"/>
<dbReference type="PaxDb" id="122586-NMB0811"/>
<dbReference type="KEGG" id="nme:NMB0811"/>
<dbReference type="PATRIC" id="fig|122586.8.peg.1023"/>
<dbReference type="HOGENOM" id="CLU_035304_0_0_4"/>
<dbReference type="InParanoid" id="Q9K016"/>
<dbReference type="OrthoDB" id="9804753at2"/>
<dbReference type="UniPathway" id="UPA00219"/>
<dbReference type="Proteomes" id="UP000000425">
    <property type="component" value="Chromosome"/>
</dbReference>
<dbReference type="GO" id="GO:0005829">
    <property type="term" value="C:cytosol"/>
    <property type="evidence" value="ECO:0000318"/>
    <property type="project" value="GO_Central"/>
</dbReference>
<dbReference type="GO" id="GO:0071949">
    <property type="term" value="F:FAD binding"/>
    <property type="evidence" value="ECO:0007669"/>
    <property type="project" value="InterPro"/>
</dbReference>
<dbReference type="GO" id="GO:0050660">
    <property type="term" value="F:flavin adenine dinucleotide binding"/>
    <property type="evidence" value="ECO:0000318"/>
    <property type="project" value="GO_Central"/>
</dbReference>
<dbReference type="GO" id="GO:0008762">
    <property type="term" value="F:UDP-N-acetylmuramate dehydrogenase activity"/>
    <property type="evidence" value="ECO:0000318"/>
    <property type="project" value="GO_Central"/>
</dbReference>
<dbReference type="GO" id="GO:0051301">
    <property type="term" value="P:cell division"/>
    <property type="evidence" value="ECO:0007669"/>
    <property type="project" value="UniProtKB-KW"/>
</dbReference>
<dbReference type="GO" id="GO:0071555">
    <property type="term" value="P:cell wall organization"/>
    <property type="evidence" value="ECO:0000318"/>
    <property type="project" value="GO_Central"/>
</dbReference>
<dbReference type="GO" id="GO:0009252">
    <property type="term" value="P:peptidoglycan biosynthetic process"/>
    <property type="evidence" value="ECO:0007669"/>
    <property type="project" value="UniProtKB-UniRule"/>
</dbReference>
<dbReference type="GO" id="GO:0008360">
    <property type="term" value="P:regulation of cell shape"/>
    <property type="evidence" value="ECO:0007669"/>
    <property type="project" value="UniProtKB-KW"/>
</dbReference>
<dbReference type="Gene3D" id="3.30.465.10">
    <property type="match status" value="1"/>
</dbReference>
<dbReference type="Gene3D" id="3.90.78.10">
    <property type="entry name" value="UDP-N-acetylenolpyruvoylglucosamine reductase, C-terminal domain"/>
    <property type="match status" value="1"/>
</dbReference>
<dbReference type="Gene3D" id="3.30.43.10">
    <property type="entry name" value="Uridine Diphospho-n-acetylenolpyruvylglucosamine Reductase, domain 2"/>
    <property type="match status" value="1"/>
</dbReference>
<dbReference type="HAMAP" id="MF_00037">
    <property type="entry name" value="MurB"/>
    <property type="match status" value="1"/>
</dbReference>
<dbReference type="InterPro" id="IPR016166">
    <property type="entry name" value="FAD-bd_PCMH"/>
</dbReference>
<dbReference type="InterPro" id="IPR036318">
    <property type="entry name" value="FAD-bd_PCMH-like_sf"/>
</dbReference>
<dbReference type="InterPro" id="IPR016167">
    <property type="entry name" value="FAD-bd_PCMH_sub1"/>
</dbReference>
<dbReference type="InterPro" id="IPR016169">
    <property type="entry name" value="FAD-bd_PCMH_sub2"/>
</dbReference>
<dbReference type="InterPro" id="IPR003170">
    <property type="entry name" value="MurB"/>
</dbReference>
<dbReference type="InterPro" id="IPR011601">
    <property type="entry name" value="MurB_C"/>
</dbReference>
<dbReference type="InterPro" id="IPR036635">
    <property type="entry name" value="MurB_C_sf"/>
</dbReference>
<dbReference type="InterPro" id="IPR006094">
    <property type="entry name" value="Oxid_FAD_bind_N"/>
</dbReference>
<dbReference type="NCBIfam" id="TIGR00179">
    <property type="entry name" value="murB"/>
    <property type="match status" value="1"/>
</dbReference>
<dbReference type="NCBIfam" id="NF000755">
    <property type="entry name" value="PRK00046.1"/>
    <property type="match status" value="1"/>
</dbReference>
<dbReference type="NCBIfam" id="NF010478">
    <property type="entry name" value="PRK13903.1"/>
    <property type="match status" value="1"/>
</dbReference>
<dbReference type="PANTHER" id="PTHR21071">
    <property type="entry name" value="UDP-N-ACETYLENOLPYRUVOYLGLUCOSAMINE REDUCTASE"/>
    <property type="match status" value="1"/>
</dbReference>
<dbReference type="PANTHER" id="PTHR21071:SF4">
    <property type="entry name" value="UDP-N-ACETYLENOLPYRUVOYLGLUCOSAMINE REDUCTASE"/>
    <property type="match status" value="1"/>
</dbReference>
<dbReference type="Pfam" id="PF01565">
    <property type="entry name" value="FAD_binding_4"/>
    <property type="match status" value="1"/>
</dbReference>
<dbReference type="Pfam" id="PF02873">
    <property type="entry name" value="MurB_C"/>
    <property type="match status" value="1"/>
</dbReference>
<dbReference type="SUPFAM" id="SSF56176">
    <property type="entry name" value="FAD-binding/transporter-associated domain-like"/>
    <property type="match status" value="1"/>
</dbReference>
<dbReference type="SUPFAM" id="SSF56194">
    <property type="entry name" value="Uridine diphospho-N-Acetylenolpyruvylglucosamine reductase, MurB, C-terminal domain"/>
    <property type="match status" value="1"/>
</dbReference>
<dbReference type="PROSITE" id="PS51387">
    <property type="entry name" value="FAD_PCMH"/>
    <property type="match status" value="1"/>
</dbReference>
<feature type="chain" id="PRO_0000179233" description="UDP-N-acetylenolpyruvoylglucosamine reductase">
    <location>
        <begin position="1"/>
        <end position="346"/>
    </location>
</feature>
<feature type="domain" description="FAD-binding PCMH-type" evidence="1">
    <location>
        <begin position="18"/>
        <end position="189"/>
    </location>
</feature>
<feature type="active site" evidence="1">
    <location>
        <position position="165"/>
    </location>
</feature>
<feature type="active site" description="Proton donor" evidence="1">
    <location>
        <position position="240"/>
    </location>
</feature>
<feature type="active site" evidence="1">
    <location>
        <position position="336"/>
    </location>
</feature>
<protein>
    <recommendedName>
        <fullName evidence="1">UDP-N-acetylenolpyruvoylglucosamine reductase</fullName>
        <ecNumber evidence="1">1.3.1.98</ecNumber>
    </recommendedName>
    <alternativeName>
        <fullName evidence="1">UDP-N-acetylmuramate dehydrogenase</fullName>
    </alternativeName>
</protein>